<geneLocation type="mitochondrion"/>
<protein>
    <recommendedName>
        <fullName>ATP synthase protein 8</fullName>
    </recommendedName>
    <alternativeName>
        <fullName>A6L</fullName>
    </alternativeName>
    <alternativeName>
        <fullName>F-ATPase subunit 8</fullName>
    </alternativeName>
</protein>
<dbReference type="EMBL" id="AY065861">
    <property type="protein sequence ID" value="AAL50150.1"/>
    <property type="molecule type" value="Genomic_DNA"/>
</dbReference>
<dbReference type="SMR" id="Q8HFZ6"/>
<dbReference type="GO" id="GO:0031966">
    <property type="term" value="C:mitochondrial membrane"/>
    <property type="evidence" value="ECO:0007669"/>
    <property type="project" value="UniProtKB-SubCell"/>
</dbReference>
<dbReference type="GO" id="GO:0045259">
    <property type="term" value="C:proton-transporting ATP synthase complex"/>
    <property type="evidence" value="ECO:0000250"/>
    <property type="project" value="UniProtKB"/>
</dbReference>
<dbReference type="GO" id="GO:0015078">
    <property type="term" value="F:proton transmembrane transporter activity"/>
    <property type="evidence" value="ECO:0007669"/>
    <property type="project" value="InterPro"/>
</dbReference>
<dbReference type="GO" id="GO:0015986">
    <property type="term" value="P:proton motive force-driven ATP synthesis"/>
    <property type="evidence" value="ECO:0007669"/>
    <property type="project" value="InterPro"/>
</dbReference>
<dbReference type="InterPro" id="IPR039017">
    <property type="entry name" value="ATP8_mammal"/>
</dbReference>
<dbReference type="InterPro" id="IPR001421">
    <property type="entry name" value="ATP8_metazoa"/>
</dbReference>
<dbReference type="PANTHER" id="PTHR13722">
    <property type="entry name" value="ATP SYNTHASE PROTEIN 8"/>
    <property type="match status" value="1"/>
</dbReference>
<dbReference type="PANTHER" id="PTHR13722:SF0">
    <property type="entry name" value="ATP SYNTHASE PROTEIN 8"/>
    <property type="match status" value="1"/>
</dbReference>
<dbReference type="Pfam" id="PF00895">
    <property type="entry name" value="ATP-synt_8"/>
    <property type="match status" value="1"/>
</dbReference>
<comment type="function">
    <text evidence="1">Mitochondrial membrane ATP synthase (F(1)F(0) ATP synthase or Complex V) produces ATP from ADP in the presence of a proton gradient across the membrane which is generated by electron transport complexes of the respiratory chain. F-type ATPases consist of two structural domains, F(1) - containing the extramembraneous catalytic core and F(0) - containing the membrane proton channel, linked together by a central stalk and a peripheral stalk. During catalysis, ATP synthesis in the catalytic domain of F(1) is coupled via a rotary mechanism of the central stalk subunits to proton translocation. Part of the complex F(0) domain. Minor subunit located with subunit a in the membrane (By similarity).</text>
</comment>
<comment type="subunit">
    <text evidence="2">F-type ATPases have 2 components, CF(1) - the catalytic core - and CF(0) - the membrane proton channel. Component of an ATP synthase complex composed of ATP5PB, ATP5MC1, ATP5F1E, ATP5PD, ATP5ME, ATP5PF, ATP5MF, MT-ATP6, MT-ATP8, ATP5F1A, ATP5F1B, ATP5F1D, ATP5F1C, ATP5PO, ATP5MG, ATP5MK and ATP5MJ (By similarity). Interacts with PRICKLE3 (By similarity).</text>
</comment>
<comment type="subcellular location">
    <subcellularLocation>
        <location>Mitochondrion membrane</location>
        <topology>Single-pass membrane protein</topology>
    </subcellularLocation>
</comment>
<comment type="similarity">
    <text evidence="5">Belongs to the ATPase protein 8 family.</text>
</comment>
<proteinExistence type="inferred from homology"/>
<keyword id="KW-0007">Acetylation</keyword>
<keyword id="KW-0066">ATP synthesis</keyword>
<keyword id="KW-0138">CF(0)</keyword>
<keyword id="KW-0375">Hydrogen ion transport</keyword>
<keyword id="KW-0406">Ion transport</keyword>
<keyword id="KW-0472">Membrane</keyword>
<keyword id="KW-0496">Mitochondrion</keyword>
<keyword id="KW-0812">Transmembrane</keyword>
<keyword id="KW-1133">Transmembrane helix</keyword>
<keyword id="KW-0813">Transport</keyword>
<evidence type="ECO:0000250" key="1"/>
<evidence type="ECO:0000250" key="2">
    <source>
        <dbReference type="UniProtKB" id="P03928"/>
    </source>
</evidence>
<evidence type="ECO:0000250" key="3">
    <source>
        <dbReference type="UniProtKB" id="P03930"/>
    </source>
</evidence>
<evidence type="ECO:0000255" key="4"/>
<evidence type="ECO:0000305" key="5"/>
<feature type="chain" id="PRO_0000195481" description="ATP synthase protein 8">
    <location>
        <begin position="1"/>
        <end position="66"/>
    </location>
</feature>
<feature type="transmembrane region" description="Helical" evidence="4">
    <location>
        <begin position="8"/>
        <end position="24"/>
    </location>
</feature>
<feature type="modified residue" description="N6-acetyllysine; alternate" evidence="3">
    <location>
        <position position="54"/>
    </location>
</feature>
<feature type="modified residue" description="N6-succinyllysine; alternate" evidence="3">
    <location>
        <position position="54"/>
    </location>
</feature>
<feature type="modified residue" description="N6-acetyllysine" evidence="3">
    <location>
        <position position="57"/>
    </location>
</feature>
<name>ATP8_ALOGU</name>
<accession>Q8HFZ6</accession>
<sequence>MPQLDMSPWPMVIMSMILTLFYITQLKMLNFTFHTTPSSKLTMSHKHKTTWELKWTKIYLPPSTYQ</sequence>
<organism>
    <name type="scientific">Alouatta guariba</name>
    <name type="common">Brown howler monkey</name>
    <name type="synonym">Alouatta fusca</name>
    <dbReference type="NCBI Taxonomy" id="182256"/>
    <lineage>
        <taxon>Eukaryota</taxon>
        <taxon>Metazoa</taxon>
        <taxon>Chordata</taxon>
        <taxon>Craniata</taxon>
        <taxon>Vertebrata</taxon>
        <taxon>Euteleostomi</taxon>
        <taxon>Mammalia</taxon>
        <taxon>Eutheria</taxon>
        <taxon>Euarchontoglires</taxon>
        <taxon>Primates</taxon>
        <taxon>Haplorrhini</taxon>
        <taxon>Platyrrhini</taxon>
        <taxon>Atelidae</taxon>
        <taxon>Alouattinae</taxon>
        <taxon>Alouatta</taxon>
    </lineage>
</organism>
<gene>
    <name type="primary">MT-ATP8</name>
    <name type="synonym">ATP8</name>
    <name type="synonym">ATPASE8</name>
    <name type="synonym">MTATP8</name>
</gene>
<reference key="1">
    <citation type="journal article" date="2003" name="Mol. Phylogenet. Evol.">
        <title>Molecular systematics and biogeography of the neotropical monkey genus, Alouatta.</title>
        <authorList>
            <person name="Cortes-Ortiz L."/>
            <person name="Bermingham E."/>
            <person name="Rico C."/>
            <person name="Rodriguez-Luna E."/>
            <person name="Sampaio I."/>
            <person name="Ruiz-Garcia M."/>
        </authorList>
    </citation>
    <scope>NUCLEOTIDE SEQUENCE [GENOMIC DNA]</scope>
</reference>